<accession>P03079</accession>
<reference key="1">
    <citation type="journal article" date="1985" name="EMBO J.">
        <title>A new member of the polyomavirus family: the hamster papovavirus. Complete nucleotide sequence and transformation properties.</title>
        <authorList>
            <person name="Delmas V."/>
            <person name="Bastien C."/>
            <person name="Scherneck S."/>
            <person name="Feunteun J."/>
        </authorList>
    </citation>
    <scope>NUCLEOTIDE SEQUENCE [GENOMIC DNA]</scope>
</reference>
<reference key="2">
    <citation type="journal article" date="1997" name="J. Virol.">
        <title>Functional interaction between the SH2 domain of Fyn and tyrosine 324 of hamster polyomavirus middle-T antigen.</title>
        <authorList>
            <person name="Dunant N.M."/>
            <person name="Messerschmitt A.S."/>
            <person name="Ballmer-Hofer K."/>
        </authorList>
    </citation>
    <scope>MUTAGENESIS OF TYR-324</scope>
    <scope>INTERACTION WITH HOST FYN</scope>
</reference>
<reference key="3">
    <citation type="journal article" date="1997" name="Structure">
        <title>The SH2 domain from the tyrosine kinase Fyn in complex with a phosphotyrosyl peptide reveals insights into domain stability and binding specificity.</title>
        <authorList>
            <person name="Mulhern T.D."/>
            <person name="Shaw G.L."/>
            <person name="Morton C.J."/>
            <person name="Day A.J."/>
            <person name="Campbell I.D."/>
        </authorList>
    </citation>
    <scope>STRUCTURE BY NMR OF 321-331</scope>
</reference>
<reference key="4">
    <citation type="journal article" date="1993" name="Nature">
        <title>Recognition of a high-affinity phosphotyrosyl peptide by the Src homology-2 domain of p56lck.</title>
        <authorList>
            <person name="Eck M.J."/>
            <person name="Shoelson S.E."/>
            <person name="Harrison S.C."/>
        </authorList>
    </citation>
    <scope>X-RAY CRYSTALLOGRAPHY (1.8 ANGSTROMS) OF 321-331</scope>
</reference>
<reference key="5">
    <citation type="journal article" date="1993" name="Cell">
        <title>Binding of a high affinity phosphotyrosyl peptide to the Src SH2 domain: crystal structures of the complexed and peptide-free forms.</title>
        <authorList>
            <person name="Waksman G."/>
            <person name="Shoelson S.E."/>
            <person name="Pant N."/>
            <person name="Cowburn D."/>
            <person name="Kuriyan J."/>
        </authorList>
    </citation>
    <scope>X-RAY CRYSTALLOGRAPHY (2.7 ANGSTROMS) OF 321-331</scope>
</reference>
<feature type="chain" id="PRO_0000115047" description="Middle T antigen">
    <location>
        <begin position="1"/>
        <end position="401"/>
    </location>
</feature>
<feature type="topological domain" description="Cytoplasmic" evidence="2">
    <location>
        <begin position="1"/>
        <end position="374"/>
    </location>
</feature>
<feature type="transmembrane region" description="Helical" evidence="2">
    <location>
        <begin position="375"/>
        <end position="395"/>
    </location>
</feature>
<feature type="topological domain" description="Extracellular" evidence="2">
    <location>
        <begin position="396"/>
        <end position="401"/>
    </location>
</feature>
<feature type="domain" description="J" evidence="3">
    <location>
        <begin position="12"/>
        <end position="75"/>
    </location>
</feature>
<feature type="region of interest" description="Disordered" evidence="4">
    <location>
        <begin position="213"/>
        <end position="235"/>
    </location>
</feature>
<feature type="mutagenesis site" description="70% loss of interaction with host Fyn." evidence="5">
    <original>Y</original>
    <variation>F</variation>
    <location>
        <position position="324"/>
    </location>
</feature>
<protein>
    <recommendedName>
        <fullName>Middle T antigen</fullName>
        <shortName>MT</shortName>
        <shortName>MT-AG</shortName>
    </recommendedName>
</protein>
<organismHost>
    <name type="scientific">Mesocricetus auratus</name>
    <name type="common">Golden hamster</name>
    <dbReference type="NCBI Taxonomy" id="10036"/>
</organismHost>
<name>MT_POVHA</name>
<keyword id="KW-0002">3D-structure</keyword>
<keyword id="KW-0025">Alternative splicing</keyword>
<keyword id="KW-0244">Early protein</keyword>
<keyword id="KW-1043">Host membrane</keyword>
<keyword id="KW-0945">Host-virus interaction</keyword>
<keyword id="KW-0472">Membrane</keyword>
<keyword id="KW-0553">Oncogene</keyword>
<keyword id="KW-0597">Phosphoprotein</keyword>
<keyword id="KW-1185">Reference proteome</keyword>
<keyword id="KW-0812">Transmembrane</keyword>
<keyword id="KW-1133">Transmembrane helix</keyword>
<organism>
    <name type="scientific">Hamster polyomavirus</name>
    <name type="common">HaPyV</name>
    <name type="synonym">Mesocricetus auratus polyomavirus 1</name>
    <dbReference type="NCBI Taxonomy" id="1891729"/>
    <lineage>
        <taxon>Viruses</taxon>
        <taxon>Monodnaviria</taxon>
        <taxon>Shotokuvirae</taxon>
        <taxon>Cossaviricota</taxon>
        <taxon>Papovaviricetes</taxon>
        <taxon>Sepolyvirales</taxon>
        <taxon>Polyomaviridae</taxon>
        <taxon>Alphapolyomavirus</taxon>
    </lineage>
</organism>
<comment type="function">
    <text evidence="1">Plays a role in transformation by modulating the activities of cellular proteins involved in control of cell proliferation and by acting as a functional homolog of an activated tyrosine kinase-associated growth-factor receptor. Recruits upon association with Ppp2/PP2A the Src tyrosine kinase component Fyn, thereby activating its kinase activity. In turn, MT becomes phosphorylated and mediates signal transduction pathways leading to cell cycle progression and cell division. MT also plays a role in regulation of early and late gene expression as well as viral DNA replication (By similarity).</text>
</comment>
<comment type="subunit">
    <text evidence="1 5">Interacts with host Ppp2/PP2A A and C subunits; this interaction alters PP2A substrate specificity and localization (By similarity). Interacts with host Fyn.</text>
</comment>
<comment type="subcellular location">
    <subcellularLocation>
        <location evidence="6">Host membrane</location>
        <topology evidence="6">Single-pass membrane protein</topology>
    </subcellularLocation>
</comment>
<comment type="alternative products">
    <event type="alternative splicing"/>
    <isoform>
        <id>P03079-1</id>
        <name>Middle T antigen</name>
        <sequence type="displayed"/>
    </isoform>
    <isoform>
        <id>P03080-1</id>
        <name>Small t antigen</name>
        <sequence type="external"/>
    </isoform>
    <isoform>
        <id>P03075-1</id>
        <name>Large T antigen</name>
        <sequence type="external"/>
    </isoform>
</comment>
<proteinExistence type="evidence at protein level"/>
<sequence length="401" mass="46562">MDRILTKEEKQALISLLDLEPQYWGDYGRMQKCYKKKCLQLHPDKGGNEELMQQLNTLWTKLKDGLYRVRLLLGPSQVRRLGKDQWNLSLQQTFSGTYFRRLCRLPITCLRNKGISTCNCILCLLRKQHFLLKKSWRVPCLVLGECYCIDCFALWFGLPVTNMLVPLYAQFLAPIPVDWLDLNVHEVYNPASGMTLMLPPPPADPESSTILTQEDTGPTLMGQQDTLTSRRNTGKSFSLSGMLMRTSPAKKSYHHQKMNSPPGIPIPPPPLFLFPVTAPVPPVTRNTQETQAERENEYMPMAPQIHLYSQIREPTHQEEEEPQYEEIPIYLELLPENPNQHLALTSTARRSLRRKYHKHNSHIITQRQRNRLRRLVLMIFLLSLGGFFLTLFFLIKRKMHL</sequence>
<evidence type="ECO:0000250" key="1"/>
<evidence type="ECO:0000255" key="2"/>
<evidence type="ECO:0000255" key="3">
    <source>
        <dbReference type="PROSITE-ProRule" id="PRU00286"/>
    </source>
</evidence>
<evidence type="ECO:0000256" key="4">
    <source>
        <dbReference type="SAM" id="MobiDB-lite"/>
    </source>
</evidence>
<evidence type="ECO:0000269" key="5">
    <source>
    </source>
</evidence>
<evidence type="ECO:0000305" key="6"/>
<dbReference type="EMBL" id="M26281">
    <property type="protein sequence ID" value="AAA67117.1"/>
    <property type="molecule type" value="Genomic_DNA"/>
</dbReference>
<dbReference type="EMBL" id="X02449">
    <property type="protein sequence ID" value="CAB59362.1"/>
    <property type="molecule type" value="Genomic_DNA"/>
</dbReference>
<dbReference type="PIR" id="A03615">
    <property type="entry name" value="TVVPMH"/>
</dbReference>
<dbReference type="RefSeq" id="YP_009111408.1">
    <molecule id="P03079-1"/>
    <property type="nucleotide sequence ID" value="NC_001663.2"/>
</dbReference>
<dbReference type="PDB" id="1AOT">
    <property type="method" value="NMR"/>
    <property type="chains" value="P=321-331"/>
</dbReference>
<dbReference type="PDB" id="1AOU">
    <property type="method" value="NMR"/>
    <property type="chains" value="P=321-331"/>
</dbReference>
<dbReference type="PDB" id="1LCJ">
    <property type="method" value="X-ray"/>
    <property type="resolution" value="1.80 A"/>
    <property type="chains" value="B=321-331"/>
</dbReference>
<dbReference type="PDB" id="1SPS">
    <property type="method" value="X-ray"/>
    <property type="resolution" value="2.70 A"/>
    <property type="chains" value="D/E/F=321-331"/>
</dbReference>
<dbReference type="PDB" id="4U1P">
    <property type="method" value="X-ray"/>
    <property type="resolution" value="1.40 A"/>
    <property type="chains" value="B=321-331"/>
</dbReference>
<dbReference type="PDBsum" id="1AOT"/>
<dbReference type="PDBsum" id="1AOU"/>
<dbReference type="PDBsum" id="1LCJ"/>
<dbReference type="PDBsum" id="1SPS"/>
<dbReference type="PDBsum" id="4U1P"/>
<dbReference type="SMR" id="P03079"/>
<dbReference type="ELM" id="P03079"/>
<dbReference type="IntAct" id="P03079">
    <property type="interactions" value="2"/>
</dbReference>
<dbReference type="MINT" id="P03079"/>
<dbReference type="iPTMnet" id="P03079"/>
<dbReference type="GeneID" id="29030998"/>
<dbReference type="KEGG" id="vg:29030998"/>
<dbReference type="OrthoDB" id="14669at10239"/>
<dbReference type="EvolutionaryTrace" id="P03079"/>
<dbReference type="Proteomes" id="UP000008477">
    <property type="component" value="Genome"/>
</dbReference>
<dbReference type="GO" id="GO:0033644">
    <property type="term" value="C:host cell membrane"/>
    <property type="evidence" value="ECO:0007669"/>
    <property type="project" value="UniProtKB-SubCell"/>
</dbReference>
<dbReference type="GO" id="GO:0016020">
    <property type="term" value="C:membrane"/>
    <property type="evidence" value="ECO:0007669"/>
    <property type="project" value="UniProtKB-KW"/>
</dbReference>
<dbReference type="Gene3D" id="1.10.287.110">
    <property type="entry name" value="DnaJ domain"/>
    <property type="match status" value="1"/>
</dbReference>
<dbReference type="Gene3D" id="1.20.120.1860">
    <property type="entry name" value="Small t-antigen, unique domain"/>
    <property type="match status" value="1"/>
</dbReference>
<dbReference type="InterPro" id="IPR001623">
    <property type="entry name" value="DnaJ_domain"/>
</dbReference>
<dbReference type="InterPro" id="IPR036869">
    <property type="entry name" value="J_dom_sf"/>
</dbReference>
<dbReference type="InterPro" id="IPR003354">
    <property type="entry name" value="Papo_T_antigen"/>
</dbReference>
<dbReference type="InterPro" id="IPR036092">
    <property type="entry name" value="Papo_T_antigensf"/>
</dbReference>
<dbReference type="Pfam" id="PF02380">
    <property type="entry name" value="Papo_T_antigen"/>
    <property type="match status" value="1"/>
</dbReference>
<dbReference type="SMART" id="SM00271">
    <property type="entry name" value="DnaJ"/>
    <property type="match status" value="1"/>
</dbReference>
<dbReference type="SUPFAM" id="SSF46565">
    <property type="entry name" value="Chaperone J-domain"/>
    <property type="match status" value="1"/>
</dbReference>
<dbReference type="SUPFAM" id="SSF161240">
    <property type="entry name" value="T-antigen specific domain-like"/>
    <property type="match status" value="1"/>
</dbReference>
<dbReference type="PROSITE" id="PS50076">
    <property type="entry name" value="DNAJ_2"/>
    <property type="match status" value="1"/>
</dbReference>